<organism>
    <name type="scientific">Pyrococcus horikoshii (strain ATCC 700860 / DSM 12428 / JCM 9974 / NBRC 100139 / OT-3)</name>
    <dbReference type="NCBI Taxonomy" id="70601"/>
    <lineage>
        <taxon>Archaea</taxon>
        <taxon>Methanobacteriati</taxon>
        <taxon>Methanobacteriota</taxon>
        <taxon>Thermococci</taxon>
        <taxon>Thermococcales</taxon>
        <taxon>Thermococcaceae</taxon>
        <taxon>Pyrococcus</taxon>
    </lineage>
</organism>
<sequence length="216" mass="25299">MINMTRKLYYEDAYLKEAKGRVLEIRDNAILLDQTIFYPTGGGQPHDRGTINGVEVLDVYKDEEGNVWHVVKEPEKFKVGDEVELKIDWDYRYKLMRIHTGLHLLEHVLNEVLGEGNWQLVGSGMSVEKGRYDIAYPENLNKYKEQIISLFNKYVDEGGEVKIWWEGDRRYTQIRDFEVIPCGGTHVKDIKEIGHIKKLKRSSIGRGKQRLEMWLE</sequence>
<evidence type="ECO:0000269" key="1">
    <source>
    </source>
</evidence>
<evidence type="ECO:0000305" key="2"/>
<evidence type="ECO:0007829" key="3">
    <source>
        <dbReference type="PDB" id="2E1B"/>
    </source>
</evidence>
<name>ALAXM_PYRHO</name>
<dbReference type="EMBL" id="BA000001">
    <property type="protein sequence ID" value="BAA29177.1"/>
    <property type="molecule type" value="Genomic_DNA"/>
</dbReference>
<dbReference type="PIR" id="B71231">
    <property type="entry name" value="B71231"/>
</dbReference>
<dbReference type="PDB" id="2E1B">
    <property type="method" value="X-ray"/>
    <property type="resolution" value="2.70 A"/>
    <property type="chains" value="A=1-216"/>
</dbReference>
<dbReference type="PDBsum" id="2E1B"/>
<dbReference type="SMR" id="O57848"/>
<dbReference type="STRING" id="70601.gene:9377016"/>
<dbReference type="EnsemblBacteria" id="BAA29177">
    <property type="protein sequence ID" value="BAA29177"/>
    <property type="gene ID" value="BAA29177"/>
</dbReference>
<dbReference type="KEGG" id="pho:PH0108"/>
<dbReference type="eggNOG" id="arCOG01254">
    <property type="taxonomic scope" value="Archaea"/>
</dbReference>
<dbReference type="BRENDA" id="3.1.1.29">
    <property type="organism ID" value="5244"/>
</dbReference>
<dbReference type="EvolutionaryTrace" id="O57848"/>
<dbReference type="Proteomes" id="UP000000752">
    <property type="component" value="Chromosome"/>
</dbReference>
<dbReference type="GO" id="GO:0005737">
    <property type="term" value="C:cytoplasm"/>
    <property type="evidence" value="ECO:0007669"/>
    <property type="project" value="UniProtKB-SubCell"/>
</dbReference>
<dbReference type="GO" id="GO:0004813">
    <property type="term" value="F:alanine-tRNA ligase activity"/>
    <property type="evidence" value="ECO:0007669"/>
    <property type="project" value="InterPro"/>
</dbReference>
<dbReference type="GO" id="GO:0002161">
    <property type="term" value="F:aminoacyl-tRNA deacylase activity"/>
    <property type="evidence" value="ECO:0000314"/>
    <property type="project" value="UniProtKB"/>
</dbReference>
<dbReference type="GO" id="GO:0005524">
    <property type="term" value="F:ATP binding"/>
    <property type="evidence" value="ECO:0007669"/>
    <property type="project" value="InterPro"/>
</dbReference>
<dbReference type="GO" id="GO:0046872">
    <property type="term" value="F:metal ion binding"/>
    <property type="evidence" value="ECO:0007669"/>
    <property type="project" value="UniProtKB-KW"/>
</dbReference>
<dbReference type="GO" id="GO:0003676">
    <property type="term" value="F:nucleic acid binding"/>
    <property type="evidence" value="ECO:0007669"/>
    <property type="project" value="InterPro"/>
</dbReference>
<dbReference type="GO" id="GO:0006419">
    <property type="term" value="P:alanyl-tRNA aminoacylation"/>
    <property type="evidence" value="ECO:0007669"/>
    <property type="project" value="InterPro"/>
</dbReference>
<dbReference type="FunFam" id="2.40.30.130:FF:000032">
    <property type="entry name" value="Alanyl-tRNA editing protein AlaX-M"/>
    <property type="match status" value="1"/>
</dbReference>
<dbReference type="Gene3D" id="2.40.30.130">
    <property type="match status" value="1"/>
</dbReference>
<dbReference type="Gene3D" id="3.30.980.10">
    <property type="entry name" value="Threonyl-trna Synthetase, Chain A, domain 2"/>
    <property type="match status" value="1"/>
</dbReference>
<dbReference type="InterPro" id="IPR018165">
    <property type="entry name" value="Ala-tRNA-synth_IIc_core"/>
</dbReference>
<dbReference type="InterPro" id="IPR018164">
    <property type="entry name" value="Ala-tRNA-synth_IIc_N"/>
</dbReference>
<dbReference type="InterPro" id="IPR051335">
    <property type="entry name" value="Alanyl-tRNA_Editing_Enzymes"/>
</dbReference>
<dbReference type="InterPro" id="IPR018163">
    <property type="entry name" value="Thr/Ala-tRNA-synth_IIc_edit"/>
</dbReference>
<dbReference type="InterPro" id="IPR009000">
    <property type="entry name" value="Transl_B-barrel_sf"/>
</dbReference>
<dbReference type="InterPro" id="IPR012947">
    <property type="entry name" value="tRNA_SAD"/>
</dbReference>
<dbReference type="PANTHER" id="PTHR43462">
    <property type="entry name" value="ALANYL-TRNA EDITING PROTEIN"/>
    <property type="match status" value="1"/>
</dbReference>
<dbReference type="PANTHER" id="PTHR43462:SF1">
    <property type="entry name" value="ALANYL-TRNA EDITING PROTEIN AARSD1"/>
    <property type="match status" value="1"/>
</dbReference>
<dbReference type="Pfam" id="PF01411">
    <property type="entry name" value="tRNA-synt_2c"/>
    <property type="match status" value="1"/>
</dbReference>
<dbReference type="Pfam" id="PF07973">
    <property type="entry name" value="tRNA_SAD"/>
    <property type="match status" value="1"/>
</dbReference>
<dbReference type="SMART" id="SM00863">
    <property type="entry name" value="tRNA_SAD"/>
    <property type="match status" value="1"/>
</dbReference>
<dbReference type="SUPFAM" id="SSF55186">
    <property type="entry name" value="ThrRS/AlaRS common domain"/>
    <property type="match status" value="1"/>
</dbReference>
<dbReference type="SUPFAM" id="SSF50447">
    <property type="entry name" value="Translation proteins"/>
    <property type="match status" value="1"/>
</dbReference>
<dbReference type="PROSITE" id="PS50860">
    <property type="entry name" value="AA_TRNA_LIGASE_II_ALA"/>
    <property type="match status" value="1"/>
</dbReference>
<protein>
    <recommendedName>
        <fullName>Alanyl-tRNA editing protein AlaX-M</fullName>
        <shortName>AlaX-M</shortName>
    </recommendedName>
    <alternativeName>
        <fullName>Alanyl-tRNA deacylase AlaX-M</fullName>
    </alternativeName>
</protein>
<gene>
    <name type="primary">alaXM</name>
    <name type="ordered locus">PH0108</name>
</gene>
<comment type="function">
    <text evidence="1">Functions in trans to edit the amino acid moiety from mischarged charged Gly-tRNA(Ala) and Ser-tRNA(Ala).</text>
</comment>
<comment type="cofactor">
    <cofactor evidence="1">
        <name>Zn(2+)</name>
        <dbReference type="ChEBI" id="CHEBI:29105"/>
    </cofactor>
    <text evidence="1">Binds 1 zinc ion per subunit.</text>
</comment>
<comment type="subunit">
    <text evidence="1">Monomer.</text>
</comment>
<comment type="subcellular location">
    <subcellularLocation>
        <location evidence="2">Cytoplasm</location>
    </subcellularLocation>
</comment>
<comment type="similarity">
    <text evidence="2">Belongs to the class-II aminoacyl-tRNA synthetase family. Editing domain AlaX-M subfamily.</text>
</comment>
<accession>O57848</accession>
<proteinExistence type="evidence at protein level"/>
<keyword id="KW-0002">3D-structure</keyword>
<keyword id="KW-0963">Cytoplasm</keyword>
<keyword id="KW-0479">Metal-binding</keyword>
<keyword id="KW-0862">Zinc</keyword>
<reference key="1">
    <citation type="journal article" date="1998" name="DNA Res.">
        <title>Complete sequence and gene organization of the genome of a hyper-thermophilic archaebacterium, Pyrococcus horikoshii OT3.</title>
        <authorList>
            <person name="Kawarabayasi Y."/>
            <person name="Sawada M."/>
            <person name="Horikawa H."/>
            <person name="Haikawa Y."/>
            <person name="Hino Y."/>
            <person name="Yamamoto S."/>
            <person name="Sekine M."/>
            <person name="Baba S."/>
            <person name="Kosugi H."/>
            <person name="Hosoyama A."/>
            <person name="Nagai Y."/>
            <person name="Sakai M."/>
            <person name="Ogura K."/>
            <person name="Otsuka R."/>
            <person name="Nakazawa H."/>
            <person name="Takamiya M."/>
            <person name="Ohfuku Y."/>
            <person name="Funahashi T."/>
            <person name="Tanaka T."/>
            <person name="Kudoh Y."/>
            <person name="Yamazaki J."/>
            <person name="Kushida N."/>
            <person name="Oguchi A."/>
            <person name="Aoki K."/>
            <person name="Yoshizawa T."/>
            <person name="Nakamura Y."/>
            <person name="Robb F.T."/>
            <person name="Horikoshi K."/>
            <person name="Masuchi Y."/>
            <person name="Shizuya H."/>
            <person name="Kikuchi H."/>
        </authorList>
    </citation>
    <scope>NUCLEOTIDE SEQUENCE [LARGE SCALE GENOMIC DNA]</scope>
    <source>
        <strain>ATCC 700860 / DSM 12428 / JCM 9974 / NBRC 100139 / OT-3</strain>
    </source>
</reference>
<reference key="2">
    <citation type="journal article" date="2007" name="Acta Crystallogr. D">
        <title>Structure of the AlaX-M trans-editing enzyme from Pyrococcus horikoshii.</title>
        <authorList>
            <person name="Fukunaga R."/>
            <person name="Yokoyama S."/>
        </authorList>
    </citation>
    <scope>X-RAY CRYSTALLOGRAPHY (2.7 ANGSTROMS)</scope>
    <scope>FUNCTION AS TRNA(ALA) EDITING PROTEIN</scope>
    <scope>SUBUNIT</scope>
    <scope>COFACTOR</scope>
    <source>
        <strain>ATCC 700860 / DSM 12428 / JCM 9974 / NBRC 100139 / OT-3</strain>
    </source>
</reference>
<feature type="chain" id="PRO_0000391648" description="Alanyl-tRNA editing protein AlaX-M">
    <location>
        <begin position="1"/>
        <end position="216"/>
    </location>
</feature>
<feature type="binding site">
    <location>
        <position position="99"/>
    </location>
    <ligand>
        <name>Zn(2+)</name>
        <dbReference type="ChEBI" id="CHEBI:29105"/>
    </ligand>
</feature>
<feature type="binding site">
    <location>
        <position position="103"/>
    </location>
    <ligand>
        <name>Zn(2+)</name>
        <dbReference type="ChEBI" id="CHEBI:29105"/>
    </ligand>
</feature>
<feature type="binding site">
    <location>
        <position position="182"/>
    </location>
    <ligand>
        <name>Zn(2+)</name>
        <dbReference type="ChEBI" id="CHEBI:29105"/>
    </ligand>
</feature>
<feature type="strand" evidence="3">
    <location>
        <begin position="17"/>
        <end position="20"/>
    </location>
</feature>
<feature type="strand" evidence="3">
    <location>
        <begin position="49"/>
        <end position="51"/>
    </location>
</feature>
<feature type="strand" evidence="3">
    <location>
        <begin position="54"/>
        <end position="60"/>
    </location>
</feature>
<feature type="strand" evidence="3">
    <location>
        <begin position="68"/>
        <end position="72"/>
    </location>
</feature>
<feature type="helix" evidence="3">
    <location>
        <begin position="74"/>
        <end position="76"/>
    </location>
</feature>
<feature type="strand" evidence="3">
    <location>
        <begin position="79"/>
        <end position="81"/>
    </location>
</feature>
<feature type="strand" evidence="3">
    <location>
        <begin position="83"/>
        <end position="87"/>
    </location>
</feature>
<feature type="helix" evidence="3">
    <location>
        <begin position="89"/>
        <end position="113"/>
    </location>
</feature>
<feature type="turn" evidence="3">
    <location>
        <begin position="114"/>
        <end position="116"/>
    </location>
</feature>
<feature type="strand" evidence="3">
    <location>
        <begin position="119"/>
        <end position="122"/>
    </location>
</feature>
<feature type="strand" evidence="3">
    <location>
        <begin position="127"/>
        <end position="135"/>
    </location>
</feature>
<feature type="helix" evidence="3">
    <location>
        <begin position="140"/>
        <end position="143"/>
    </location>
</feature>
<feature type="helix" evidence="3">
    <location>
        <begin position="144"/>
        <end position="157"/>
    </location>
</feature>
<feature type="strand" evidence="3">
    <location>
        <begin position="160"/>
        <end position="168"/>
    </location>
</feature>
<feature type="strand" evidence="3">
    <location>
        <begin position="170"/>
        <end position="174"/>
    </location>
</feature>
<feature type="helix" evidence="3">
    <location>
        <begin position="190"/>
        <end position="192"/>
    </location>
</feature>
<feature type="strand" evidence="3">
    <location>
        <begin position="196"/>
        <end position="205"/>
    </location>
</feature>
<feature type="strand" evidence="3">
    <location>
        <begin position="208"/>
        <end position="215"/>
    </location>
</feature>